<sequence length="330" mass="36416">MQGSVTEFLKPRLVDIEQISTTHAKVTLEPLERGFGHTLGNALRRILLSSMPGCAVTEVEIEGVLHEYSTKEGVQEDILEILLNLKGLAVRVAEGKDEVFITLNKSGSGPVVAGDITHDGDVEIVNPEHVICHLTSDNAAIAMRIKVERGRGYVPASARIHTEEDERPIGRLLVDATFSPVDKIAYSVEAARVEQRTDLDKLVIDMETNGTLEPEEAIRRAATILAEQLDAFVDLRDVRVPEEKEEKPEFDPILLRPVDDLELTVRSANCLKAEAIHYIGDLVQRTEVELLKTPNLGKKSLTEIKDVLASRGLSLGMRLENWPPASIAED</sequence>
<evidence type="ECO:0000255" key="1">
    <source>
        <dbReference type="HAMAP-Rule" id="MF_00059"/>
    </source>
</evidence>
<reference key="1">
    <citation type="submission" date="2007-03" db="EMBL/GenBank/DDBJ databases">
        <authorList>
            <person name="Heidelberg J."/>
        </authorList>
    </citation>
    <scope>NUCLEOTIDE SEQUENCE [LARGE SCALE GENOMIC DNA]</scope>
    <source>
        <strain>ATCC 39541 / Classical Ogawa 395 / O395</strain>
    </source>
</reference>
<reference key="2">
    <citation type="journal article" date="2008" name="PLoS ONE">
        <title>A recalibrated molecular clock and independent origins for the cholera pandemic clones.</title>
        <authorList>
            <person name="Feng L."/>
            <person name="Reeves P.R."/>
            <person name="Lan R."/>
            <person name="Ren Y."/>
            <person name="Gao C."/>
            <person name="Zhou Z."/>
            <person name="Ren Y."/>
            <person name="Cheng J."/>
            <person name="Wang W."/>
            <person name="Wang J."/>
            <person name="Qian W."/>
            <person name="Li D."/>
            <person name="Wang L."/>
        </authorList>
    </citation>
    <scope>NUCLEOTIDE SEQUENCE [LARGE SCALE GENOMIC DNA]</scope>
    <source>
        <strain>ATCC 39541 / Classical Ogawa 395 / O395</strain>
    </source>
</reference>
<proteinExistence type="inferred from homology"/>
<keyword id="KW-0240">DNA-directed RNA polymerase</keyword>
<keyword id="KW-0548">Nucleotidyltransferase</keyword>
<keyword id="KW-0804">Transcription</keyword>
<keyword id="KW-0808">Transferase</keyword>
<gene>
    <name evidence="1" type="primary">rpoA</name>
    <name type="ordered locus">VC0395_A2149</name>
    <name type="ordered locus">VC395_2684</name>
</gene>
<protein>
    <recommendedName>
        <fullName evidence="1">DNA-directed RNA polymerase subunit alpha</fullName>
        <shortName evidence="1">RNAP subunit alpha</shortName>
        <ecNumber evidence="1">2.7.7.6</ecNumber>
    </recommendedName>
    <alternativeName>
        <fullName evidence="1">RNA polymerase subunit alpha</fullName>
    </alternativeName>
    <alternativeName>
        <fullName evidence="1">Transcriptase subunit alpha</fullName>
    </alternativeName>
</protein>
<name>RPOA_VIBC3</name>
<comment type="function">
    <text evidence="1">DNA-dependent RNA polymerase catalyzes the transcription of DNA into RNA using the four ribonucleoside triphosphates as substrates.</text>
</comment>
<comment type="catalytic activity">
    <reaction evidence="1">
        <text>RNA(n) + a ribonucleoside 5'-triphosphate = RNA(n+1) + diphosphate</text>
        <dbReference type="Rhea" id="RHEA:21248"/>
        <dbReference type="Rhea" id="RHEA-COMP:14527"/>
        <dbReference type="Rhea" id="RHEA-COMP:17342"/>
        <dbReference type="ChEBI" id="CHEBI:33019"/>
        <dbReference type="ChEBI" id="CHEBI:61557"/>
        <dbReference type="ChEBI" id="CHEBI:140395"/>
        <dbReference type="EC" id="2.7.7.6"/>
    </reaction>
</comment>
<comment type="subunit">
    <text evidence="1">Homodimer. The RNAP catalytic core consists of 2 alpha, 1 beta, 1 beta' and 1 omega subunit. When a sigma factor is associated with the core the holoenzyme is formed, which can initiate transcription.</text>
</comment>
<comment type="domain">
    <text evidence="1">The N-terminal domain is essential for RNAP assembly and basal transcription, whereas the C-terminal domain is involved in interaction with transcriptional regulators and with upstream promoter elements.</text>
</comment>
<comment type="similarity">
    <text evidence="1">Belongs to the RNA polymerase alpha chain family.</text>
</comment>
<feature type="chain" id="PRO_1000071156" description="DNA-directed RNA polymerase subunit alpha">
    <location>
        <begin position="1"/>
        <end position="330"/>
    </location>
</feature>
<feature type="region of interest" description="Alpha N-terminal domain (alpha-NTD)" evidence="1">
    <location>
        <begin position="1"/>
        <end position="236"/>
    </location>
</feature>
<feature type="region of interest" description="Alpha C-terminal domain (alpha-CTD)" evidence="1">
    <location>
        <begin position="250"/>
        <end position="330"/>
    </location>
</feature>
<dbReference type="EC" id="2.7.7.6" evidence="1"/>
<dbReference type="EMBL" id="CP000627">
    <property type="protein sequence ID" value="ABQ20700.1"/>
    <property type="molecule type" value="Genomic_DNA"/>
</dbReference>
<dbReference type="EMBL" id="CP001235">
    <property type="protein sequence ID" value="ACP10670.1"/>
    <property type="molecule type" value="Genomic_DNA"/>
</dbReference>
<dbReference type="RefSeq" id="WP_001162087.1">
    <property type="nucleotide sequence ID" value="NZ_JAACZH010000007.1"/>
</dbReference>
<dbReference type="SMR" id="A5F572"/>
<dbReference type="GeneID" id="94012777"/>
<dbReference type="KEGG" id="vco:VC0395_A2149"/>
<dbReference type="KEGG" id="vcr:VC395_2684"/>
<dbReference type="PATRIC" id="fig|345073.21.peg.2584"/>
<dbReference type="eggNOG" id="COG0202">
    <property type="taxonomic scope" value="Bacteria"/>
</dbReference>
<dbReference type="HOGENOM" id="CLU_053084_0_0_6"/>
<dbReference type="OrthoDB" id="9805706at2"/>
<dbReference type="Proteomes" id="UP000000249">
    <property type="component" value="Chromosome 2"/>
</dbReference>
<dbReference type="GO" id="GO:0005737">
    <property type="term" value="C:cytoplasm"/>
    <property type="evidence" value="ECO:0007669"/>
    <property type="project" value="UniProtKB-ARBA"/>
</dbReference>
<dbReference type="GO" id="GO:0000428">
    <property type="term" value="C:DNA-directed RNA polymerase complex"/>
    <property type="evidence" value="ECO:0007669"/>
    <property type="project" value="UniProtKB-KW"/>
</dbReference>
<dbReference type="GO" id="GO:0003677">
    <property type="term" value="F:DNA binding"/>
    <property type="evidence" value="ECO:0007669"/>
    <property type="project" value="UniProtKB-UniRule"/>
</dbReference>
<dbReference type="GO" id="GO:0003899">
    <property type="term" value="F:DNA-directed RNA polymerase activity"/>
    <property type="evidence" value="ECO:0007669"/>
    <property type="project" value="UniProtKB-UniRule"/>
</dbReference>
<dbReference type="GO" id="GO:0046983">
    <property type="term" value="F:protein dimerization activity"/>
    <property type="evidence" value="ECO:0007669"/>
    <property type="project" value="InterPro"/>
</dbReference>
<dbReference type="GO" id="GO:0006351">
    <property type="term" value="P:DNA-templated transcription"/>
    <property type="evidence" value="ECO:0007669"/>
    <property type="project" value="UniProtKB-UniRule"/>
</dbReference>
<dbReference type="CDD" id="cd06928">
    <property type="entry name" value="RNAP_alpha_NTD"/>
    <property type="match status" value="1"/>
</dbReference>
<dbReference type="FunFam" id="1.10.150.20:FF:000001">
    <property type="entry name" value="DNA-directed RNA polymerase subunit alpha"/>
    <property type="match status" value="1"/>
</dbReference>
<dbReference type="FunFam" id="2.170.120.12:FF:000001">
    <property type="entry name" value="DNA-directed RNA polymerase subunit alpha"/>
    <property type="match status" value="1"/>
</dbReference>
<dbReference type="Gene3D" id="1.10.150.20">
    <property type="entry name" value="5' to 3' exonuclease, C-terminal subdomain"/>
    <property type="match status" value="1"/>
</dbReference>
<dbReference type="Gene3D" id="2.170.120.12">
    <property type="entry name" value="DNA-directed RNA polymerase, insert domain"/>
    <property type="match status" value="1"/>
</dbReference>
<dbReference type="Gene3D" id="3.30.1360.10">
    <property type="entry name" value="RNA polymerase, RBP11-like subunit"/>
    <property type="match status" value="1"/>
</dbReference>
<dbReference type="HAMAP" id="MF_00059">
    <property type="entry name" value="RNApol_bact_RpoA"/>
    <property type="match status" value="1"/>
</dbReference>
<dbReference type="InterPro" id="IPR011262">
    <property type="entry name" value="DNA-dir_RNA_pol_insert"/>
</dbReference>
<dbReference type="InterPro" id="IPR011263">
    <property type="entry name" value="DNA-dir_RNA_pol_RpoA/D/Rpb3"/>
</dbReference>
<dbReference type="InterPro" id="IPR011773">
    <property type="entry name" value="DNA-dir_RpoA"/>
</dbReference>
<dbReference type="InterPro" id="IPR036603">
    <property type="entry name" value="RBP11-like"/>
</dbReference>
<dbReference type="InterPro" id="IPR011260">
    <property type="entry name" value="RNAP_asu_C"/>
</dbReference>
<dbReference type="InterPro" id="IPR036643">
    <property type="entry name" value="RNApol_insert_sf"/>
</dbReference>
<dbReference type="NCBIfam" id="NF003513">
    <property type="entry name" value="PRK05182.1-2"/>
    <property type="match status" value="1"/>
</dbReference>
<dbReference type="NCBIfam" id="NF003519">
    <property type="entry name" value="PRK05182.2-5"/>
    <property type="match status" value="1"/>
</dbReference>
<dbReference type="NCBIfam" id="TIGR02027">
    <property type="entry name" value="rpoA"/>
    <property type="match status" value="1"/>
</dbReference>
<dbReference type="Pfam" id="PF01000">
    <property type="entry name" value="RNA_pol_A_bac"/>
    <property type="match status" value="1"/>
</dbReference>
<dbReference type="Pfam" id="PF03118">
    <property type="entry name" value="RNA_pol_A_CTD"/>
    <property type="match status" value="1"/>
</dbReference>
<dbReference type="Pfam" id="PF01193">
    <property type="entry name" value="RNA_pol_L"/>
    <property type="match status" value="1"/>
</dbReference>
<dbReference type="SMART" id="SM00662">
    <property type="entry name" value="RPOLD"/>
    <property type="match status" value="1"/>
</dbReference>
<dbReference type="SUPFAM" id="SSF47789">
    <property type="entry name" value="C-terminal domain of RNA polymerase alpha subunit"/>
    <property type="match status" value="1"/>
</dbReference>
<dbReference type="SUPFAM" id="SSF56553">
    <property type="entry name" value="Insert subdomain of RNA polymerase alpha subunit"/>
    <property type="match status" value="1"/>
</dbReference>
<dbReference type="SUPFAM" id="SSF55257">
    <property type="entry name" value="RBP11-like subunits of RNA polymerase"/>
    <property type="match status" value="1"/>
</dbReference>
<organism>
    <name type="scientific">Vibrio cholerae serotype O1 (strain ATCC 39541 / Classical Ogawa 395 / O395)</name>
    <dbReference type="NCBI Taxonomy" id="345073"/>
    <lineage>
        <taxon>Bacteria</taxon>
        <taxon>Pseudomonadati</taxon>
        <taxon>Pseudomonadota</taxon>
        <taxon>Gammaproteobacteria</taxon>
        <taxon>Vibrionales</taxon>
        <taxon>Vibrionaceae</taxon>
        <taxon>Vibrio</taxon>
    </lineage>
</organism>
<accession>A5F572</accession>
<accession>C3LXH0</accession>